<organism>
    <name type="scientific">Ruminiclostridium cellulolyticum (strain ATCC 35319 / DSM 5812 / JCM 6584 / H10)</name>
    <name type="common">Clostridium cellulolyticum</name>
    <dbReference type="NCBI Taxonomy" id="394503"/>
    <lineage>
        <taxon>Bacteria</taxon>
        <taxon>Bacillati</taxon>
        <taxon>Bacillota</taxon>
        <taxon>Clostridia</taxon>
        <taxon>Eubacteriales</taxon>
        <taxon>Oscillospiraceae</taxon>
        <taxon>Ruminiclostridium</taxon>
    </lineage>
</organism>
<dbReference type="EMBL" id="CP001348">
    <property type="protein sequence ID" value="ACL76475.1"/>
    <property type="molecule type" value="Genomic_DNA"/>
</dbReference>
<dbReference type="RefSeq" id="WP_015925575.1">
    <property type="nucleotide sequence ID" value="NC_011898.1"/>
</dbReference>
<dbReference type="SMR" id="B8I442"/>
<dbReference type="STRING" id="394503.Ccel_2131"/>
<dbReference type="KEGG" id="cce:Ccel_2131"/>
<dbReference type="eggNOG" id="COG1160">
    <property type="taxonomic scope" value="Bacteria"/>
</dbReference>
<dbReference type="HOGENOM" id="CLU_016077_6_2_9"/>
<dbReference type="OrthoDB" id="9805918at2"/>
<dbReference type="Proteomes" id="UP000001349">
    <property type="component" value="Chromosome"/>
</dbReference>
<dbReference type="GO" id="GO:0005525">
    <property type="term" value="F:GTP binding"/>
    <property type="evidence" value="ECO:0007669"/>
    <property type="project" value="UniProtKB-UniRule"/>
</dbReference>
<dbReference type="GO" id="GO:0043022">
    <property type="term" value="F:ribosome binding"/>
    <property type="evidence" value="ECO:0007669"/>
    <property type="project" value="TreeGrafter"/>
</dbReference>
<dbReference type="GO" id="GO:0042254">
    <property type="term" value="P:ribosome biogenesis"/>
    <property type="evidence" value="ECO:0007669"/>
    <property type="project" value="UniProtKB-KW"/>
</dbReference>
<dbReference type="CDD" id="cd01894">
    <property type="entry name" value="EngA1"/>
    <property type="match status" value="1"/>
</dbReference>
<dbReference type="CDD" id="cd01895">
    <property type="entry name" value="EngA2"/>
    <property type="match status" value="1"/>
</dbReference>
<dbReference type="FunFam" id="3.30.300.20:FF:000004">
    <property type="entry name" value="GTPase Der"/>
    <property type="match status" value="1"/>
</dbReference>
<dbReference type="FunFam" id="3.40.50.300:FF:000040">
    <property type="entry name" value="GTPase Der"/>
    <property type="match status" value="1"/>
</dbReference>
<dbReference type="FunFam" id="3.40.50.300:FF:000057">
    <property type="entry name" value="GTPase Der"/>
    <property type="match status" value="1"/>
</dbReference>
<dbReference type="Gene3D" id="3.30.300.20">
    <property type="match status" value="1"/>
</dbReference>
<dbReference type="Gene3D" id="3.40.50.300">
    <property type="entry name" value="P-loop containing nucleotide triphosphate hydrolases"/>
    <property type="match status" value="2"/>
</dbReference>
<dbReference type="HAMAP" id="MF_00195">
    <property type="entry name" value="GTPase_Der"/>
    <property type="match status" value="1"/>
</dbReference>
<dbReference type="InterPro" id="IPR031166">
    <property type="entry name" value="G_ENGA"/>
</dbReference>
<dbReference type="InterPro" id="IPR006073">
    <property type="entry name" value="GTP-bd"/>
</dbReference>
<dbReference type="InterPro" id="IPR016484">
    <property type="entry name" value="GTPase_Der"/>
</dbReference>
<dbReference type="InterPro" id="IPR032859">
    <property type="entry name" value="KH_dom-like"/>
</dbReference>
<dbReference type="InterPro" id="IPR015946">
    <property type="entry name" value="KH_dom-like_a/b"/>
</dbReference>
<dbReference type="InterPro" id="IPR027417">
    <property type="entry name" value="P-loop_NTPase"/>
</dbReference>
<dbReference type="InterPro" id="IPR005225">
    <property type="entry name" value="Small_GTP-bd"/>
</dbReference>
<dbReference type="NCBIfam" id="TIGR03594">
    <property type="entry name" value="GTPase_EngA"/>
    <property type="match status" value="1"/>
</dbReference>
<dbReference type="NCBIfam" id="TIGR00231">
    <property type="entry name" value="small_GTP"/>
    <property type="match status" value="2"/>
</dbReference>
<dbReference type="PANTHER" id="PTHR43834">
    <property type="entry name" value="GTPASE DER"/>
    <property type="match status" value="1"/>
</dbReference>
<dbReference type="PANTHER" id="PTHR43834:SF6">
    <property type="entry name" value="GTPASE DER"/>
    <property type="match status" value="1"/>
</dbReference>
<dbReference type="Pfam" id="PF14714">
    <property type="entry name" value="KH_dom-like"/>
    <property type="match status" value="1"/>
</dbReference>
<dbReference type="Pfam" id="PF01926">
    <property type="entry name" value="MMR_HSR1"/>
    <property type="match status" value="2"/>
</dbReference>
<dbReference type="PIRSF" id="PIRSF006485">
    <property type="entry name" value="GTP-binding_EngA"/>
    <property type="match status" value="1"/>
</dbReference>
<dbReference type="PRINTS" id="PR00326">
    <property type="entry name" value="GTP1OBG"/>
</dbReference>
<dbReference type="SUPFAM" id="SSF52540">
    <property type="entry name" value="P-loop containing nucleoside triphosphate hydrolases"/>
    <property type="match status" value="2"/>
</dbReference>
<dbReference type="PROSITE" id="PS51712">
    <property type="entry name" value="G_ENGA"/>
    <property type="match status" value="2"/>
</dbReference>
<protein>
    <recommendedName>
        <fullName evidence="1">GTPase Der</fullName>
    </recommendedName>
    <alternativeName>
        <fullName evidence="1">GTP-binding protein EngA</fullName>
    </alternativeName>
</protein>
<gene>
    <name evidence="1" type="primary">der</name>
    <name type="synonym">engA</name>
    <name type="ordered locus">Ccel_2131</name>
</gene>
<name>DER_RUMCH</name>
<sequence>MGKPVVAVVGRPNVGKSTFFNYLAGSRISIVEDTPGVTRDRIYTEIEWRNTKFTLIDTGGIEPYSEDIIMQQMKRQAEIAIETADVIIFMVDAKDGMTATDKEVATMLRKSQKPVVLCVNKVDRVGDPPPDVYEFYNLGMGEMQIISSVHGLGIGDLLDEVFEHFPEDIASEEEEDVIKVAVVGKPNAGKSSLINSILGENRVIVSNIPGTTRDAIDTHVEKDGQKYTFIDTAGIRRRSKISENIEKYSTIRSWTAVERADVCLIMIDAEDGVTEQDTKIAGYAHQQGKASIIVINKWDLIEKQTGTLEEYRKVVHEKLGFMTYAPVLFISAKTGQRVIKIYELIKFVADQAAFRISTGMLNDLVSEAVAMVQPPSDKGKRLKIYYMTQIGVKPPSFVVFVNDVELFHYSYERYLENQLRKNFGFEGTPIRFIHRQREKEN</sequence>
<accession>B8I442</accession>
<feature type="chain" id="PRO_1000124351" description="GTPase Der">
    <location>
        <begin position="1"/>
        <end position="441"/>
    </location>
</feature>
<feature type="domain" description="EngA-type G 1">
    <location>
        <begin position="4"/>
        <end position="169"/>
    </location>
</feature>
<feature type="domain" description="EngA-type G 2">
    <location>
        <begin position="178"/>
        <end position="353"/>
    </location>
</feature>
<feature type="domain" description="KH-like" evidence="1">
    <location>
        <begin position="354"/>
        <end position="438"/>
    </location>
</feature>
<feature type="binding site" evidence="1">
    <location>
        <begin position="10"/>
        <end position="17"/>
    </location>
    <ligand>
        <name>GTP</name>
        <dbReference type="ChEBI" id="CHEBI:37565"/>
        <label>1</label>
    </ligand>
</feature>
<feature type="binding site" evidence="1">
    <location>
        <begin position="57"/>
        <end position="61"/>
    </location>
    <ligand>
        <name>GTP</name>
        <dbReference type="ChEBI" id="CHEBI:37565"/>
        <label>1</label>
    </ligand>
</feature>
<feature type="binding site" evidence="1">
    <location>
        <begin position="120"/>
        <end position="123"/>
    </location>
    <ligand>
        <name>GTP</name>
        <dbReference type="ChEBI" id="CHEBI:37565"/>
        <label>1</label>
    </ligand>
</feature>
<feature type="binding site" evidence="1">
    <location>
        <begin position="184"/>
        <end position="191"/>
    </location>
    <ligand>
        <name>GTP</name>
        <dbReference type="ChEBI" id="CHEBI:37565"/>
        <label>2</label>
    </ligand>
</feature>
<feature type="binding site" evidence="1">
    <location>
        <begin position="231"/>
        <end position="235"/>
    </location>
    <ligand>
        <name>GTP</name>
        <dbReference type="ChEBI" id="CHEBI:37565"/>
        <label>2</label>
    </ligand>
</feature>
<feature type="binding site" evidence="1">
    <location>
        <begin position="296"/>
        <end position="299"/>
    </location>
    <ligand>
        <name>GTP</name>
        <dbReference type="ChEBI" id="CHEBI:37565"/>
        <label>2</label>
    </ligand>
</feature>
<comment type="function">
    <text evidence="1">GTPase that plays an essential role in the late steps of ribosome biogenesis.</text>
</comment>
<comment type="subunit">
    <text evidence="1">Associates with the 50S ribosomal subunit.</text>
</comment>
<comment type="similarity">
    <text evidence="1">Belongs to the TRAFAC class TrmE-Era-EngA-EngB-Septin-like GTPase superfamily. EngA (Der) GTPase family.</text>
</comment>
<evidence type="ECO:0000255" key="1">
    <source>
        <dbReference type="HAMAP-Rule" id="MF_00195"/>
    </source>
</evidence>
<keyword id="KW-0342">GTP-binding</keyword>
<keyword id="KW-0547">Nucleotide-binding</keyword>
<keyword id="KW-1185">Reference proteome</keyword>
<keyword id="KW-0677">Repeat</keyword>
<keyword id="KW-0690">Ribosome biogenesis</keyword>
<reference key="1">
    <citation type="submission" date="2009-01" db="EMBL/GenBank/DDBJ databases">
        <title>Complete sequence of Clostridium cellulolyticum H10.</title>
        <authorList>
            <consortium name="US DOE Joint Genome Institute"/>
            <person name="Lucas S."/>
            <person name="Copeland A."/>
            <person name="Lapidus A."/>
            <person name="Glavina del Rio T."/>
            <person name="Dalin E."/>
            <person name="Tice H."/>
            <person name="Bruce D."/>
            <person name="Goodwin L."/>
            <person name="Pitluck S."/>
            <person name="Chertkov O."/>
            <person name="Saunders E."/>
            <person name="Brettin T."/>
            <person name="Detter J.C."/>
            <person name="Han C."/>
            <person name="Larimer F."/>
            <person name="Land M."/>
            <person name="Hauser L."/>
            <person name="Kyrpides N."/>
            <person name="Ivanova N."/>
            <person name="Zhou J."/>
            <person name="Richardson P."/>
        </authorList>
    </citation>
    <scope>NUCLEOTIDE SEQUENCE [LARGE SCALE GENOMIC DNA]</scope>
    <source>
        <strain>ATCC 35319 / DSM 5812 / JCM 6584 / H10</strain>
    </source>
</reference>
<proteinExistence type="inferred from homology"/>